<sequence length="321" mass="37213">MGQKVSRTDFEWVYTEEPHASRRKIILEKYPQIKKLFGHDPNFKWVAGAMVLTQILALFVVKDLSWSWLIVAAYCFGGIINHSLMLAVHEISHNLAFGHSRPMHNRILGFICNLPIGLPMSISFKKYHLEHHRYQGDEAIDTDIPTLLEARLFDTTFGKFLWVCLQPFFYIFRPLIINPKPPTRLEIINTVVQLTFNALIVYFLGWKPLAYLLIGSILAMGLHPVAGHFISEHYMFAKGFETYSYYGPLNWITFNVGYHNEHHDFPAVPGSRLPEVKRIAKEFYDTMPQHTSWTRVLYDFIMDPAVGPYARVKRRQRGLAS</sequence>
<feature type="chain" id="PRO_0000453621" description="Sphingolipid delta(4)-desaturase DES1">
    <location>
        <begin position="1"/>
        <end position="321"/>
    </location>
</feature>
<feature type="transmembrane region" description="Helical" evidence="1">
    <location>
        <begin position="41"/>
        <end position="61"/>
    </location>
</feature>
<feature type="transmembrane region" description="Helical" evidence="1">
    <location>
        <begin position="68"/>
        <end position="88"/>
    </location>
</feature>
<feature type="transmembrane region" description="Helical" evidence="1">
    <location>
        <begin position="107"/>
        <end position="127"/>
    </location>
</feature>
<feature type="transmembrane region" description="Helical" evidence="1">
    <location>
        <begin position="157"/>
        <end position="177"/>
    </location>
</feature>
<feature type="transmembrane region" description="Helical" evidence="1">
    <location>
        <begin position="187"/>
        <end position="206"/>
    </location>
</feature>
<feature type="transmembrane region" description="Helical" evidence="1">
    <location>
        <begin position="208"/>
        <end position="230"/>
    </location>
</feature>
<comment type="function">
    <text evidence="2 3 4">Has sphingolipid-delta-4-desaturase activity. Converts sphinganine-containing sphingolipids (such as N-acylsphinganines or dihydroceramides) into sphingolipids containing the delta-4-desaturated sphingoid base (E)-sphing-4-enine (such as N-acylsphing-4-enines or ceramides), which are required for many different functions (structural functions as well as signaling) (PubMed:11937514). Required to initiate spermatid differentiation among other signals (PubMed:9003299). Required for central spindle assembly and cytokinesis during male meiosis, may act as part of an anchoring mechanism that links membrane-bounded cellular compartments to components of the cytoskeleton (PubMed:9819060).</text>
</comment>
<comment type="catalytic activity">
    <reaction evidence="2">
        <text>an N-acylsphinganine + 2 Fe(II)-[cytochrome b5] + O2 + 2 H(+) = an N-acylsphing-4-enine + 2 Fe(III)-[cytochrome b5] + 2 H2O</text>
        <dbReference type="Rhea" id="RHEA:46544"/>
        <dbReference type="Rhea" id="RHEA-COMP:10438"/>
        <dbReference type="Rhea" id="RHEA-COMP:10439"/>
        <dbReference type="ChEBI" id="CHEBI:15377"/>
        <dbReference type="ChEBI" id="CHEBI:15378"/>
        <dbReference type="ChEBI" id="CHEBI:15379"/>
        <dbReference type="ChEBI" id="CHEBI:29033"/>
        <dbReference type="ChEBI" id="CHEBI:29034"/>
        <dbReference type="ChEBI" id="CHEBI:31488"/>
        <dbReference type="ChEBI" id="CHEBI:52639"/>
        <dbReference type="EC" id="1.14.19.17"/>
    </reaction>
    <physiologicalReaction direction="left-to-right" evidence="2">
        <dbReference type="Rhea" id="RHEA:46545"/>
    </physiologicalReaction>
</comment>
<comment type="catalytic activity">
    <reaction evidence="2">
        <text>an N-acyleicosasphinganine + 2 Fe(II)-[cytochrome b5] + O2 + 2 H(+) = an N-acyleicosasphing-4-enine + 2 Fe(III)-[cytochrome b5] + 2 H2O</text>
        <dbReference type="Rhea" id="RHEA:55800"/>
        <dbReference type="Rhea" id="RHEA-COMP:10438"/>
        <dbReference type="Rhea" id="RHEA-COMP:10439"/>
        <dbReference type="ChEBI" id="CHEBI:15377"/>
        <dbReference type="ChEBI" id="CHEBI:15378"/>
        <dbReference type="ChEBI" id="CHEBI:15379"/>
        <dbReference type="ChEBI" id="CHEBI:29033"/>
        <dbReference type="ChEBI" id="CHEBI:29034"/>
        <dbReference type="ChEBI" id="CHEBI:71984"/>
        <dbReference type="ChEBI" id="CHEBI:71986"/>
    </reaction>
    <physiologicalReaction direction="left-to-right" evidence="2">
        <dbReference type="Rhea" id="RHEA:55801"/>
    </physiologicalReaction>
</comment>
<comment type="pathway">
    <text evidence="8">Sphingolipid metabolism.</text>
</comment>
<comment type="subcellular location">
    <subcellularLocation>
        <location>Endoplasmic reticulum membrane</location>
        <topology>Multi-pass membrane protein</topology>
    </subcellularLocation>
    <subcellularLocation>
        <location>Membrane</location>
        <topology evidence="9">Multi-pass membrane protein</topology>
    </subcellularLocation>
    <subcellularLocation>
        <location evidence="4">Mitochondrion</location>
    </subcellularLocation>
</comment>
<comment type="tissue specificity">
    <text evidence="3 4">Testes.</text>
</comment>
<comment type="disruption phenotype">
    <text evidence="3 4">Primary spermatocytes become mature in size but degenerate without initiating meiotic chromosome condensation in their nuclei. The mutation does not affect female fertility but leads to semi-lethality both in males and females during embryonic stages (PubMed:9003299). Homozygous mutant spermatids show a misshapen Nebenkern, which varies in size and is associated with multiple nuclei (PubMed:9819060).</text>
</comment>
<comment type="similarity">
    <text evidence="7">Belongs to the fatty acid desaturase type 1 family. DEGS subfamily.</text>
</comment>
<proteinExistence type="evidence at protein level"/>
<name>DEGS1_DROME</name>
<protein>
    <recommendedName>
        <fullName evidence="5">Sphingolipid delta(4)-desaturase DES1</fullName>
        <ecNumber evidence="2">1.14.19.17</ecNumber>
    </recommendedName>
    <alternativeName>
        <fullName evidence="5 6">Degenerative spermatocyte homolog 1</fullName>
        <shortName evidence="5 6">DES-1</shortName>
    </alternativeName>
    <alternativeName>
        <fullName evidence="5">Dihydroceramide desaturase-1</fullName>
    </alternativeName>
</protein>
<organism>
    <name type="scientific">Drosophila melanogaster</name>
    <name type="common">Fruit fly</name>
    <dbReference type="NCBI Taxonomy" id="7227"/>
    <lineage>
        <taxon>Eukaryota</taxon>
        <taxon>Metazoa</taxon>
        <taxon>Ecdysozoa</taxon>
        <taxon>Arthropoda</taxon>
        <taxon>Hexapoda</taxon>
        <taxon>Insecta</taxon>
        <taxon>Pterygota</taxon>
        <taxon>Neoptera</taxon>
        <taxon>Endopterygota</taxon>
        <taxon>Diptera</taxon>
        <taxon>Brachycera</taxon>
        <taxon>Muscomorpha</taxon>
        <taxon>Ephydroidea</taxon>
        <taxon>Drosophilidae</taxon>
        <taxon>Drosophila</taxon>
        <taxon>Sophophora</taxon>
    </lineage>
</organism>
<reference key="1">
    <citation type="journal article" date="2000" name="Science">
        <title>The genome sequence of Drosophila melanogaster.</title>
        <authorList>
            <person name="Adams M.D."/>
            <person name="Celniker S.E."/>
            <person name="Holt R.A."/>
            <person name="Evans C.A."/>
            <person name="Gocayne J.D."/>
            <person name="Amanatides P.G."/>
            <person name="Scherer S.E."/>
            <person name="Li P.W."/>
            <person name="Hoskins R.A."/>
            <person name="Galle R.F."/>
            <person name="George R.A."/>
            <person name="Lewis S.E."/>
            <person name="Richards S."/>
            <person name="Ashburner M."/>
            <person name="Henderson S.N."/>
            <person name="Sutton G.G."/>
            <person name="Wortman J.R."/>
            <person name="Yandell M.D."/>
            <person name="Zhang Q."/>
            <person name="Chen L.X."/>
            <person name="Brandon R.C."/>
            <person name="Rogers Y.-H.C."/>
            <person name="Blazej R.G."/>
            <person name="Champe M."/>
            <person name="Pfeiffer B.D."/>
            <person name="Wan K.H."/>
            <person name="Doyle C."/>
            <person name="Baxter E.G."/>
            <person name="Helt G."/>
            <person name="Nelson C.R."/>
            <person name="Miklos G.L.G."/>
            <person name="Abril J.F."/>
            <person name="Agbayani A."/>
            <person name="An H.-J."/>
            <person name="Andrews-Pfannkoch C."/>
            <person name="Baldwin D."/>
            <person name="Ballew R.M."/>
            <person name="Basu A."/>
            <person name="Baxendale J."/>
            <person name="Bayraktaroglu L."/>
            <person name="Beasley E.M."/>
            <person name="Beeson K.Y."/>
            <person name="Benos P.V."/>
            <person name="Berman B.P."/>
            <person name="Bhandari D."/>
            <person name="Bolshakov S."/>
            <person name="Borkova D."/>
            <person name="Botchan M.R."/>
            <person name="Bouck J."/>
            <person name="Brokstein P."/>
            <person name="Brottier P."/>
            <person name="Burtis K.C."/>
            <person name="Busam D.A."/>
            <person name="Butler H."/>
            <person name="Cadieu E."/>
            <person name="Center A."/>
            <person name="Chandra I."/>
            <person name="Cherry J.M."/>
            <person name="Cawley S."/>
            <person name="Dahlke C."/>
            <person name="Davenport L.B."/>
            <person name="Davies P."/>
            <person name="de Pablos B."/>
            <person name="Delcher A."/>
            <person name="Deng Z."/>
            <person name="Mays A.D."/>
            <person name="Dew I."/>
            <person name="Dietz S.M."/>
            <person name="Dodson K."/>
            <person name="Doup L.E."/>
            <person name="Downes M."/>
            <person name="Dugan-Rocha S."/>
            <person name="Dunkov B.C."/>
            <person name="Dunn P."/>
            <person name="Durbin K.J."/>
            <person name="Evangelista C.C."/>
            <person name="Ferraz C."/>
            <person name="Ferriera S."/>
            <person name="Fleischmann W."/>
            <person name="Fosler C."/>
            <person name="Gabrielian A.E."/>
            <person name="Garg N.S."/>
            <person name="Gelbart W.M."/>
            <person name="Glasser K."/>
            <person name="Glodek A."/>
            <person name="Gong F."/>
            <person name="Gorrell J.H."/>
            <person name="Gu Z."/>
            <person name="Guan P."/>
            <person name="Harris M."/>
            <person name="Harris N.L."/>
            <person name="Harvey D.A."/>
            <person name="Heiman T.J."/>
            <person name="Hernandez J.R."/>
            <person name="Houck J."/>
            <person name="Hostin D."/>
            <person name="Houston K.A."/>
            <person name="Howland T.J."/>
            <person name="Wei M.-H."/>
            <person name="Ibegwam C."/>
            <person name="Jalali M."/>
            <person name="Kalush F."/>
            <person name="Karpen G.H."/>
            <person name="Ke Z."/>
            <person name="Kennison J.A."/>
            <person name="Ketchum K.A."/>
            <person name="Kimmel B.E."/>
            <person name="Kodira C.D."/>
            <person name="Kraft C.L."/>
            <person name="Kravitz S."/>
            <person name="Kulp D."/>
            <person name="Lai Z."/>
            <person name="Lasko P."/>
            <person name="Lei Y."/>
            <person name="Levitsky A.A."/>
            <person name="Li J.H."/>
            <person name="Li Z."/>
            <person name="Liang Y."/>
            <person name="Lin X."/>
            <person name="Liu X."/>
            <person name="Mattei B."/>
            <person name="McIntosh T.C."/>
            <person name="McLeod M.P."/>
            <person name="McPherson D."/>
            <person name="Merkulov G."/>
            <person name="Milshina N.V."/>
            <person name="Mobarry C."/>
            <person name="Morris J."/>
            <person name="Moshrefi A."/>
            <person name="Mount S.M."/>
            <person name="Moy M."/>
            <person name="Murphy B."/>
            <person name="Murphy L."/>
            <person name="Muzny D.M."/>
            <person name="Nelson D.L."/>
            <person name="Nelson D.R."/>
            <person name="Nelson K.A."/>
            <person name="Nixon K."/>
            <person name="Nusskern D.R."/>
            <person name="Pacleb J.M."/>
            <person name="Palazzolo M."/>
            <person name="Pittman G.S."/>
            <person name="Pan S."/>
            <person name="Pollard J."/>
            <person name="Puri V."/>
            <person name="Reese M.G."/>
            <person name="Reinert K."/>
            <person name="Remington K."/>
            <person name="Saunders R.D.C."/>
            <person name="Scheeler F."/>
            <person name="Shen H."/>
            <person name="Shue B.C."/>
            <person name="Siden-Kiamos I."/>
            <person name="Simpson M."/>
            <person name="Skupski M.P."/>
            <person name="Smith T.J."/>
            <person name="Spier E."/>
            <person name="Spradling A.C."/>
            <person name="Stapleton M."/>
            <person name="Strong R."/>
            <person name="Sun E."/>
            <person name="Svirskas R."/>
            <person name="Tector C."/>
            <person name="Turner R."/>
            <person name="Venter E."/>
            <person name="Wang A.H."/>
            <person name="Wang X."/>
            <person name="Wang Z.-Y."/>
            <person name="Wassarman D.A."/>
            <person name="Weinstock G.M."/>
            <person name="Weissenbach J."/>
            <person name="Williams S.M."/>
            <person name="Woodage T."/>
            <person name="Worley K.C."/>
            <person name="Wu D."/>
            <person name="Yang S."/>
            <person name="Yao Q.A."/>
            <person name="Ye J."/>
            <person name="Yeh R.-F."/>
            <person name="Zaveri J.S."/>
            <person name="Zhan M."/>
            <person name="Zhang G."/>
            <person name="Zhao Q."/>
            <person name="Zheng L."/>
            <person name="Zheng X.H."/>
            <person name="Zhong F.N."/>
            <person name="Zhong W."/>
            <person name="Zhou X."/>
            <person name="Zhu S.C."/>
            <person name="Zhu X."/>
            <person name="Smith H.O."/>
            <person name="Gibbs R.A."/>
            <person name="Myers E.W."/>
            <person name="Rubin G.M."/>
            <person name="Venter J.C."/>
        </authorList>
    </citation>
    <scope>NUCLEOTIDE SEQUENCE [LARGE SCALE GENOMIC DNA]</scope>
    <source>
        <strain>Berkeley</strain>
    </source>
</reference>
<reference key="2">
    <citation type="journal article" date="2002" name="Genome Biol.">
        <title>Annotation of the Drosophila melanogaster euchromatic genome: a systematic review.</title>
        <authorList>
            <person name="Misra S."/>
            <person name="Crosby M.A."/>
            <person name="Mungall C.J."/>
            <person name="Matthews B.B."/>
            <person name="Campbell K.S."/>
            <person name="Hradecky P."/>
            <person name="Huang Y."/>
            <person name="Kaminker J.S."/>
            <person name="Millburn G.H."/>
            <person name="Prochnik S.E."/>
            <person name="Smith C.D."/>
            <person name="Tupy J.L."/>
            <person name="Whitfield E.J."/>
            <person name="Bayraktaroglu L."/>
            <person name="Berman B.P."/>
            <person name="Bettencourt B.R."/>
            <person name="Celniker S.E."/>
            <person name="de Grey A.D.N.J."/>
            <person name="Drysdale R.A."/>
            <person name="Harris N.L."/>
            <person name="Richter J."/>
            <person name="Russo S."/>
            <person name="Schroeder A.J."/>
            <person name="Shu S.Q."/>
            <person name="Stapleton M."/>
            <person name="Yamada C."/>
            <person name="Ashburner M."/>
            <person name="Gelbart W.M."/>
            <person name="Rubin G.M."/>
            <person name="Lewis S.E."/>
        </authorList>
    </citation>
    <scope>GENOME REANNOTATION</scope>
    <source>
        <strain>Berkeley</strain>
    </source>
</reference>
<reference evidence="10" key="3">
    <citation type="submission" date="2001-10" db="EMBL/GenBank/DDBJ databases">
        <authorList>
            <person name="Stapleton M."/>
            <person name="Brokstein P."/>
            <person name="Hong L."/>
            <person name="Agbayani A."/>
            <person name="Carlson J."/>
            <person name="Champe M."/>
            <person name="Chavez C."/>
            <person name="Dorsett V."/>
            <person name="Farfan D."/>
            <person name="Frise E."/>
            <person name="George R."/>
            <person name="Gonzalez M."/>
            <person name="Guarin H."/>
            <person name="Li P."/>
            <person name="Liao G."/>
            <person name="Miranda A."/>
            <person name="Mungall C.J."/>
            <person name="Nunoo J."/>
            <person name="Pacleb J."/>
            <person name="Paragas V."/>
            <person name="Park S."/>
            <person name="Phouanenavong S."/>
            <person name="Wan K."/>
            <person name="Yu C."/>
            <person name="Lewis S.E."/>
            <person name="Rubin G.M."/>
            <person name="Celniker S."/>
        </authorList>
    </citation>
    <scope>NUCLEOTIDE SEQUENCE [LARGE SCALE MRNA]</scope>
    <source>
        <strain evidence="10">Berkeley</strain>
    </source>
</reference>
<reference evidence="11" key="4">
    <citation type="journal article" date="2002" name="J. Biol. Chem.">
        <title>Identification and characterization of a sphingolipid delta 4-desaturase family.</title>
        <authorList>
            <person name="Ternes P."/>
            <person name="Franke S."/>
            <person name="Zaehringer U."/>
            <person name="Sperling P."/>
            <person name="Heinz E."/>
        </authorList>
    </citation>
    <scope>NUCLEOTIDE SEQUENCE [MRNA]</scope>
    <scope>FUNCTION</scope>
    <scope>CATALYTIC ACTIVITY</scope>
</reference>
<reference key="5">
    <citation type="journal article" date="1996" name="Mol. Gen. Genet.">
        <title>Degenerative spermatocyte, a novel gene encoding a transmembrane protein required for the initiation of meiosis in Drosophila spermatogenesis.</title>
        <authorList>
            <person name="Endo K."/>
            <person name="Akiyama T."/>
            <person name="Kobayashi S."/>
            <person name="Okada M."/>
        </authorList>
    </citation>
    <scope>FUNCTION</scope>
    <scope>DISRUPTION PHENOTYPE</scope>
    <scope>TISSUE SPECIFICITY</scope>
</reference>
<reference key="6">
    <citation type="journal article" date="1998" name="Mol. Gen. Genet.">
        <title>The Des-1 protein, required for central spindle assembly and cytokinesis, is associated with mitochondria along the meiotic spindle apparatus and with the contractile ring during male meiosis in Drosophila melanogaster.</title>
        <authorList>
            <person name="Basu J."/>
            <person name="Li Z."/>
        </authorList>
    </citation>
    <scope>FUNCTION</scope>
    <scope>DISRUPTION PHENOTYPE</scope>
    <scope>SUBCELLULAR LOCATION</scope>
    <scope>TISSUE SPECIFICITY</scope>
</reference>
<keyword id="KW-0256">Endoplasmic reticulum</keyword>
<keyword id="KW-0443">Lipid metabolism</keyword>
<keyword id="KW-0472">Membrane</keyword>
<keyword id="KW-0496">Mitochondrion</keyword>
<keyword id="KW-0560">Oxidoreductase</keyword>
<keyword id="KW-1185">Reference proteome</keyword>
<keyword id="KW-0812">Transmembrane</keyword>
<keyword id="KW-1133">Transmembrane helix</keyword>
<accession>Q94515</accession>
<dbReference type="EC" id="1.14.19.17" evidence="2"/>
<dbReference type="EMBL" id="AE014134">
    <property type="protein sequence ID" value="AAF52318.1"/>
    <property type="molecule type" value="Genomic_DNA"/>
</dbReference>
<dbReference type="EMBL" id="X94180">
    <property type="protein sequence ID" value="CAA63889.1"/>
    <property type="molecule type" value="Genomic_DNA"/>
</dbReference>
<dbReference type="EMBL" id="AY061196">
    <property type="protein sequence ID" value="AAL28744.1"/>
    <property type="molecule type" value="mRNA"/>
</dbReference>
<dbReference type="EMBL" id="AF466379">
    <property type="protein sequence ID" value="AAM12535.1"/>
    <property type="molecule type" value="mRNA"/>
</dbReference>
<dbReference type="RefSeq" id="NP_476594.1">
    <property type="nucleotide sequence ID" value="NM_057246.5"/>
</dbReference>
<dbReference type="FunCoup" id="Q94515">
    <property type="interactions" value="934"/>
</dbReference>
<dbReference type="STRING" id="7227.FBpp0078810"/>
<dbReference type="SwissLipids" id="SLP:000000169"/>
<dbReference type="PaxDb" id="7227-FBpp0078810"/>
<dbReference type="DNASU" id="33836"/>
<dbReference type="EnsemblMetazoa" id="FBtr0079179">
    <property type="protein sequence ID" value="FBpp0078810"/>
    <property type="gene ID" value="FBgn0001941"/>
</dbReference>
<dbReference type="GeneID" id="33836"/>
<dbReference type="KEGG" id="dme:Dmel_CG9078"/>
<dbReference type="UCSC" id="CG9078-RA">
    <property type="organism name" value="d. melanogaster"/>
</dbReference>
<dbReference type="AGR" id="FB:FBgn0001941"/>
<dbReference type="CTD" id="33836"/>
<dbReference type="FlyBase" id="FBgn0001941">
    <property type="gene designation" value="ifc"/>
</dbReference>
<dbReference type="VEuPathDB" id="VectorBase:FBgn0001941"/>
<dbReference type="eggNOG" id="KOG2987">
    <property type="taxonomic scope" value="Eukaryota"/>
</dbReference>
<dbReference type="GeneTree" id="ENSGT00390000013448"/>
<dbReference type="HOGENOM" id="CLU_032156_0_0_1"/>
<dbReference type="InParanoid" id="Q94515"/>
<dbReference type="OMA" id="KEFYETM"/>
<dbReference type="OrthoDB" id="200948at2759"/>
<dbReference type="PhylomeDB" id="Q94515"/>
<dbReference type="BRENDA" id="1.14.19.17">
    <property type="organism ID" value="1994"/>
</dbReference>
<dbReference type="Reactome" id="R-DME-1660661">
    <property type="pathway name" value="Sphingolipid de novo biosynthesis"/>
</dbReference>
<dbReference type="Reactome" id="R-DME-6798695">
    <property type="pathway name" value="Neutrophil degranulation"/>
</dbReference>
<dbReference type="BioGRID-ORCS" id="33836">
    <property type="hits" value="0 hits in 3 CRISPR screens"/>
</dbReference>
<dbReference type="GenomeRNAi" id="33836"/>
<dbReference type="PRO" id="PR:Q94515"/>
<dbReference type="Proteomes" id="UP000000803">
    <property type="component" value="Chromosome 2L"/>
</dbReference>
<dbReference type="Bgee" id="FBgn0001941">
    <property type="expression patterns" value="Expressed in oviduct (Drosophila) and 186 other cell types or tissues"/>
</dbReference>
<dbReference type="ExpressionAtlas" id="Q94515">
    <property type="expression patterns" value="baseline and differential"/>
</dbReference>
<dbReference type="GO" id="GO:0005783">
    <property type="term" value="C:endoplasmic reticulum"/>
    <property type="evidence" value="ECO:0000314"/>
    <property type="project" value="FlyBase"/>
</dbReference>
<dbReference type="GO" id="GO:0005789">
    <property type="term" value="C:endoplasmic reticulum membrane"/>
    <property type="evidence" value="ECO:0007669"/>
    <property type="project" value="UniProtKB-SubCell"/>
</dbReference>
<dbReference type="GO" id="GO:0005770">
    <property type="term" value="C:late endosome"/>
    <property type="evidence" value="ECO:0000315"/>
    <property type="project" value="FlyBase"/>
</dbReference>
<dbReference type="GO" id="GO:0005739">
    <property type="term" value="C:mitochondrion"/>
    <property type="evidence" value="ECO:0007669"/>
    <property type="project" value="UniProtKB-SubCell"/>
</dbReference>
<dbReference type="GO" id="GO:0042284">
    <property type="term" value="F:sphingolipid delta-4 desaturase activity"/>
    <property type="evidence" value="ECO:0000314"/>
    <property type="project" value="FlyBase"/>
</dbReference>
<dbReference type="GO" id="GO:0046513">
    <property type="term" value="P:ceramide biosynthetic process"/>
    <property type="evidence" value="ECO:0000318"/>
    <property type="project" value="GO_Central"/>
</dbReference>
<dbReference type="GO" id="GO:1904503">
    <property type="term" value="P:negative regulation of lipophagy"/>
    <property type="evidence" value="ECO:0000315"/>
    <property type="project" value="FlyBase"/>
</dbReference>
<dbReference type="CDD" id="cd03508">
    <property type="entry name" value="Delta4-sphingolipid-FADS-like"/>
    <property type="match status" value="1"/>
</dbReference>
<dbReference type="InterPro" id="IPR011388">
    <property type="entry name" value="DES1/DES2"/>
</dbReference>
<dbReference type="InterPro" id="IPR005804">
    <property type="entry name" value="FA_desaturase_dom"/>
</dbReference>
<dbReference type="InterPro" id="IPR013866">
    <property type="entry name" value="Sphingolipid_d4-desaturase_N"/>
</dbReference>
<dbReference type="PANTHER" id="PTHR12879">
    <property type="entry name" value="SPHINGOLIPID DELTA 4 DESATURASE/C-4 HYDROXYLASE PROTEIN DES2"/>
    <property type="match status" value="1"/>
</dbReference>
<dbReference type="PANTHER" id="PTHR12879:SF8">
    <property type="entry name" value="SPHINGOLIPID DELTA(4)-DESATURASE DES1"/>
    <property type="match status" value="1"/>
</dbReference>
<dbReference type="Pfam" id="PF00487">
    <property type="entry name" value="FA_desaturase"/>
    <property type="match status" value="1"/>
</dbReference>
<dbReference type="Pfam" id="PF08557">
    <property type="entry name" value="Lipid_DES"/>
    <property type="match status" value="1"/>
</dbReference>
<dbReference type="PIRSF" id="PIRSF017228">
    <property type="entry name" value="Sphnglp_dlt4_des"/>
    <property type="match status" value="1"/>
</dbReference>
<dbReference type="SMART" id="SM01269">
    <property type="entry name" value="Lipid_DES"/>
    <property type="match status" value="1"/>
</dbReference>
<dbReference type="PROSITE" id="PS00142">
    <property type="entry name" value="ZINC_PROTEASE"/>
    <property type="match status" value="1"/>
</dbReference>
<gene>
    <name evidence="12" type="primary">ifc</name>
    <name evidence="12" type="ORF">CG9078</name>
</gene>
<evidence type="ECO:0000255" key="1"/>
<evidence type="ECO:0000269" key="2">
    <source>
    </source>
</evidence>
<evidence type="ECO:0000269" key="3">
    <source>
    </source>
</evidence>
<evidence type="ECO:0000269" key="4">
    <source>
    </source>
</evidence>
<evidence type="ECO:0000303" key="5">
    <source>
    </source>
</evidence>
<evidence type="ECO:0000303" key="6">
    <source>
    </source>
</evidence>
<evidence type="ECO:0000305" key="7"/>
<evidence type="ECO:0000305" key="8">
    <source>
    </source>
</evidence>
<evidence type="ECO:0000305" key="9">
    <source>
    </source>
</evidence>
<evidence type="ECO:0000312" key="10">
    <source>
        <dbReference type="EMBL" id="AAL28744.1"/>
    </source>
</evidence>
<evidence type="ECO:0000312" key="11">
    <source>
        <dbReference type="EMBL" id="AAM12535.1"/>
    </source>
</evidence>
<evidence type="ECO:0000312" key="12">
    <source>
        <dbReference type="FlyBase" id="FBgn0001941"/>
    </source>
</evidence>